<protein>
    <recommendedName>
        <fullName evidence="1">Ketol-acid reductoisomerase (NADP(+))</fullName>
        <shortName evidence="1">KARI</shortName>
        <ecNumber evidence="1">1.1.1.86</ecNumber>
    </recommendedName>
    <alternativeName>
        <fullName evidence="1">Acetohydroxy-acid isomeroreductase</fullName>
        <shortName evidence="1">AHIR</shortName>
    </alternativeName>
    <alternativeName>
        <fullName evidence="1">Alpha-keto-beta-hydroxylacyl reductoisomerase</fullName>
    </alternativeName>
    <alternativeName>
        <fullName evidence="1">Ketol-acid reductoisomerase type 2</fullName>
    </alternativeName>
    <alternativeName>
        <fullName evidence="1">Ketol-acid reductoisomerase type II</fullName>
    </alternativeName>
</protein>
<keyword id="KW-0028">Amino-acid biosynthesis</keyword>
<keyword id="KW-0100">Branched-chain amino acid biosynthesis</keyword>
<keyword id="KW-0460">Magnesium</keyword>
<keyword id="KW-0479">Metal-binding</keyword>
<keyword id="KW-0521">NADP</keyword>
<keyword id="KW-0560">Oxidoreductase</keyword>
<keyword id="KW-0677">Repeat</keyword>
<reference key="1">
    <citation type="submission" date="2007-11" db="EMBL/GenBank/DDBJ databases">
        <authorList>
            <consortium name="The Salmonella enterica serovar Paratyphi B Genome Sequencing Project"/>
            <person name="McClelland M."/>
            <person name="Sanderson E.K."/>
            <person name="Porwollik S."/>
            <person name="Spieth J."/>
            <person name="Clifton W.S."/>
            <person name="Fulton R."/>
            <person name="Cordes M."/>
            <person name="Wollam A."/>
            <person name="Shah N."/>
            <person name="Pepin K."/>
            <person name="Bhonagiri V."/>
            <person name="Nash W."/>
            <person name="Johnson M."/>
            <person name="Thiruvilangam P."/>
            <person name="Wilson R."/>
        </authorList>
    </citation>
    <scope>NUCLEOTIDE SEQUENCE [LARGE SCALE GENOMIC DNA]</scope>
    <source>
        <strain>ATCC BAA-1250 / SPB7</strain>
    </source>
</reference>
<organism>
    <name type="scientific">Salmonella paratyphi B (strain ATCC BAA-1250 / SPB7)</name>
    <dbReference type="NCBI Taxonomy" id="1016998"/>
    <lineage>
        <taxon>Bacteria</taxon>
        <taxon>Pseudomonadati</taxon>
        <taxon>Pseudomonadota</taxon>
        <taxon>Gammaproteobacteria</taxon>
        <taxon>Enterobacterales</taxon>
        <taxon>Enterobacteriaceae</taxon>
        <taxon>Salmonella</taxon>
    </lineage>
</organism>
<proteinExistence type="inferred from homology"/>
<feature type="chain" id="PRO_1000080644" description="Ketol-acid reductoisomerase (NADP(+))">
    <location>
        <begin position="1"/>
        <end position="491"/>
    </location>
</feature>
<feature type="domain" description="KARI N-terminal Rossmann" evidence="2">
    <location>
        <begin position="15"/>
        <end position="208"/>
    </location>
</feature>
<feature type="domain" description="KARI C-terminal knotted 1" evidence="3">
    <location>
        <begin position="209"/>
        <end position="344"/>
    </location>
</feature>
<feature type="domain" description="KARI C-terminal knotted 2" evidence="3">
    <location>
        <begin position="345"/>
        <end position="484"/>
    </location>
</feature>
<feature type="active site" evidence="1">
    <location>
        <position position="132"/>
    </location>
</feature>
<feature type="binding site" evidence="1">
    <location>
        <begin position="45"/>
        <end position="48"/>
    </location>
    <ligand>
        <name>NADP(+)</name>
        <dbReference type="ChEBI" id="CHEBI:58349"/>
    </ligand>
</feature>
<feature type="binding site" evidence="1">
    <location>
        <position position="68"/>
    </location>
    <ligand>
        <name>NADP(+)</name>
        <dbReference type="ChEBI" id="CHEBI:58349"/>
    </ligand>
</feature>
<feature type="binding site" evidence="1">
    <location>
        <position position="76"/>
    </location>
    <ligand>
        <name>NADP(+)</name>
        <dbReference type="ChEBI" id="CHEBI:58349"/>
    </ligand>
</feature>
<feature type="binding site" evidence="1">
    <location>
        <position position="78"/>
    </location>
    <ligand>
        <name>NADP(+)</name>
        <dbReference type="ChEBI" id="CHEBI:58349"/>
    </ligand>
</feature>
<feature type="binding site" evidence="1">
    <location>
        <begin position="108"/>
        <end position="110"/>
    </location>
    <ligand>
        <name>NADP(+)</name>
        <dbReference type="ChEBI" id="CHEBI:58349"/>
    </ligand>
</feature>
<feature type="binding site" evidence="1">
    <location>
        <position position="158"/>
    </location>
    <ligand>
        <name>NADP(+)</name>
        <dbReference type="ChEBI" id="CHEBI:58349"/>
    </ligand>
</feature>
<feature type="binding site" evidence="1">
    <location>
        <position position="217"/>
    </location>
    <ligand>
        <name>Mg(2+)</name>
        <dbReference type="ChEBI" id="CHEBI:18420"/>
        <label>1</label>
    </ligand>
</feature>
<feature type="binding site" evidence="1">
    <location>
        <position position="217"/>
    </location>
    <ligand>
        <name>Mg(2+)</name>
        <dbReference type="ChEBI" id="CHEBI:18420"/>
        <label>2</label>
    </ligand>
</feature>
<feature type="binding site" evidence="1">
    <location>
        <position position="221"/>
    </location>
    <ligand>
        <name>Mg(2+)</name>
        <dbReference type="ChEBI" id="CHEBI:18420"/>
        <label>1</label>
    </ligand>
</feature>
<feature type="binding site" evidence="1">
    <location>
        <position position="389"/>
    </location>
    <ligand>
        <name>Mg(2+)</name>
        <dbReference type="ChEBI" id="CHEBI:18420"/>
        <label>2</label>
    </ligand>
</feature>
<feature type="binding site" evidence="1">
    <location>
        <position position="393"/>
    </location>
    <ligand>
        <name>Mg(2+)</name>
        <dbReference type="ChEBI" id="CHEBI:18420"/>
        <label>2</label>
    </ligand>
</feature>
<feature type="binding site" evidence="1">
    <location>
        <position position="414"/>
    </location>
    <ligand>
        <name>substrate</name>
    </ligand>
</feature>
<accession>A9MXE7</accession>
<comment type="function">
    <text evidence="1">Involved in the biosynthesis of branched-chain amino acids (BCAA). Catalyzes an alkyl-migration followed by a ketol-acid reduction of (S)-2-acetolactate (S2AL) to yield (R)-2,3-dihydroxy-isovalerate. In the isomerase reaction, S2AL is rearranged via a Mg-dependent methyl migration to produce 3-hydroxy-3-methyl-2-ketobutyrate (HMKB). In the reductase reaction, this 2-ketoacid undergoes a metal-dependent reduction by NADPH to yield (R)-2,3-dihydroxy-isovalerate.</text>
</comment>
<comment type="catalytic activity">
    <reaction evidence="1">
        <text>(2R)-2,3-dihydroxy-3-methylbutanoate + NADP(+) = (2S)-2-acetolactate + NADPH + H(+)</text>
        <dbReference type="Rhea" id="RHEA:22068"/>
        <dbReference type="ChEBI" id="CHEBI:15378"/>
        <dbReference type="ChEBI" id="CHEBI:49072"/>
        <dbReference type="ChEBI" id="CHEBI:57783"/>
        <dbReference type="ChEBI" id="CHEBI:58349"/>
        <dbReference type="ChEBI" id="CHEBI:58476"/>
        <dbReference type="EC" id="1.1.1.86"/>
    </reaction>
</comment>
<comment type="catalytic activity">
    <reaction evidence="1">
        <text>(2R,3R)-2,3-dihydroxy-3-methylpentanoate + NADP(+) = (S)-2-ethyl-2-hydroxy-3-oxobutanoate + NADPH + H(+)</text>
        <dbReference type="Rhea" id="RHEA:13493"/>
        <dbReference type="ChEBI" id="CHEBI:15378"/>
        <dbReference type="ChEBI" id="CHEBI:49256"/>
        <dbReference type="ChEBI" id="CHEBI:49258"/>
        <dbReference type="ChEBI" id="CHEBI:57783"/>
        <dbReference type="ChEBI" id="CHEBI:58349"/>
        <dbReference type="EC" id="1.1.1.86"/>
    </reaction>
</comment>
<comment type="cofactor">
    <cofactor evidence="1">
        <name>Mg(2+)</name>
        <dbReference type="ChEBI" id="CHEBI:18420"/>
    </cofactor>
    <text evidence="1">Binds 2 magnesium ions per subunit.</text>
</comment>
<comment type="pathway">
    <text evidence="1">Amino-acid biosynthesis; L-isoleucine biosynthesis; L-isoleucine from 2-oxobutanoate: step 2/4.</text>
</comment>
<comment type="pathway">
    <text evidence="1">Amino-acid biosynthesis; L-valine biosynthesis; L-valine from pyruvate: step 2/4.</text>
</comment>
<comment type="similarity">
    <text evidence="1">Belongs to the ketol-acid reductoisomerase family.</text>
</comment>
<evidence type="ECO:0000255" key="1">
    <source>
        <dbReference type="HAMAP-Rule" id="MF_00435"/>
    </source>
</evidence>
<evidence type="ECO:0000255" key="2">
    <source>
        <dbReference type="PROSITE-ProRule" id="PRU01197"/>
    </source>
</evidence>
<evidence type="ECO:0000255" key="3">
    <source>
        <dbReference type="PROSITE-ProRule" id="PRU01198"/>
    </source>
</evidence>
<gene>
    <name evidence="1" type="primary">ilvC</name>
    <name type="ordered locus">SPAB_04854</name>
</gene>
<sequence length="491" mass="53926">MANYFNTLNLRQQLAQLGKCRFMGRDEFADGASYLQGKKVVIVGCGAQGLNQGLNMRDSGLDISYALRKEAIAEKRASWRKATENGFKVGTYEELIPQADLVVNLTPDKQHSDVVRSVQPLMKDGAALGYSHGFNIVEVGEQIRKDITVVMVAPKCPGTEVREEYKRGFGVPTLIAVHPENDPKGEGMAIAKAWAAATGGHRAGVLESSFVAEVKSDLMGEQTILCGMLQAGSLLCFDKLVAEGTDPAYAEKLIQFGWETITEALKQGGITLMMDRLSNPAKLRAYALSEQLKEIMAPLFQKHMDDIISGEFSSGMMADWANDDKKLLTWREETGKTAFETAPQFEGKIGEQEYFDKGVLMIAMVKAGVELAFETMVDSGIIEESAYYESLHELPLIANTIARKRLYEMNVVISDTAEYGNYLFSYACVPLLKPFMAELQPGDLGSAIPEGAVDNAQLRDVNDAIRSHAIEQVGKKLRGYMTDMKRIAVAG</sequence>
<dbReference type="EC" id="1.1.1.86" evidence="1"/>
<dbReference type="EMBL" id="CP000886">
    <property type="protein sequence ID" value="ABX70158.1"/>
    <property type="molecule type" value="Genomic_DNA"/>
</dbReference>
<dbReference type="RefSeq" id="WP_000024943.1">
    <property type="nucleotide sequence ID" value="NC_010102.1"/>
</dbReference>
<dbReference type="SMR" id="A9MXE7"/>
<dbReference type="KEGG" id="spq:SPAB_04854"/>
<dbReference type="PATRIC" id="fig|1016998.12.peg.4562"/>
<dbReference type="HOGENOM" id="CLU_551905_0_0_6"/>
<dbReference type="BioCyc" id="SENT1016998:SPAB_RS19730-MONOMER"/>
<dbReference type="UniPathway" id="UPA00047">
    <property type="reaction ID" value="UER00056"/>
</dbReference>
<dbReference type="UniPathway" id="UPA00049">
    <property type="reaction ID" value="UER00060"/>
</dbReference>
<dbReference type="Proteomes" id="UP000008556">
    <property type="component" value="Chromosome"/>
</dbReference>
<dbReference type="GO" id="GO:0005829">
    <property type="term" value="C:cytosol"/>
    <property type="evidence" value="ECO:0007669"/>
    <property type="project" value="TreeGrafter"/>
</dbReference>
<dbReference type="GO" id="GO:0004455">
    <property type="term" value="F:ketol-acid reductoisomerase activity"/>
    <property type="evidence" value="ECO:0007669"/>
    <property type="project" value="UniProtKB-UniRule"/>
</dbReference>
<dbReference type="GO" id="GO:0000287">
    <property type="term" value="F:magnesium ion binding"/>
    <property type="evidence" value="ECO:0007669"/>
    <property type="project" value="UniProtKB-UniRule"/>
</dbReference>
<dbReference type="GO" id="GO:0009097">
    <property type="term" value="P:isoleucine biosynthetic process"/>
    <property type="evidence" value="ECO:0007669"/>
    <property type="project" value="UniProtKB-UniRule"/>
</dbReference>
<dbReference type="GO" id="GO:0009099">
    <property type="term" value="P:L-valine biosynthetic process"/>
    <property type="evidence" value="ECO:0007669"/>
    <property type="project" value="UniProtKB-UniRule"/>
</dbReference>
<dbReference type="FunFam" id="1.10.1040.10:FF:000007">
    <property type="entry name" value="Ketol-acid reductoisomerase (NADP(+))"/>
    <property type="match status" value="1"/>
</dbReference>
<dbReference type="FunFam" id="3.40.50.720:FF:000043">
    <property type="entry name" value="Ketol-acid reductoisomerase (NADP(+))"/>
    <property type="match status" value="1"/>
</dbReference>
<dbReference type="Gene3D" id="1.10.1040.10">
    <property type="entry name" value="N-(1-d-carboxylethyl)-l-norvaline Dehydrogenase, domain 2"/>
    <property type="match status" value="1"/>
</dbReference>
<dbReference type="Gene3D" id="3.40.50.720">
    <property type="entry name" value="NAD(P)-binding Rossmann-like Domain"/>
    <property type="match status" value="1"/>
</dbReference>
<dbReference type="HAMAP" id="MF_00435">
    <property type="entry name" value="IlvC"/>
    <property type="match status" value="1"/>
</dbReference>
<dbReference type="InterPro" id="IPR008927">
    <property type="entry name" value="6-PGluconate_DH-like_C_sf"/>
</dbReference>
<dbReference type="InterPro" id="IPR013328">
    <property type="entry name" value="6PGD_dom2"/>
</dbReference>
<dbReference type="InterPro" id="IPR013023">
    <property type="entry name" value="KARI"/>
</dbReference>
<dbReference type="InterPro" id="IPR000506">
    <property type="entry name" value="KARI_C"/>
</dbReference>
<dbReference type="InterPro" id="IPR013116">
    <property type="entry name" value="KARI_N"/>
</dbReference>
<dbReference type="InterPro" id="IPR036291">
    <property type="entry name" value="NAD(P)-bd_dom_sf"/>
</dbReference>
<dbReference type="NCBIfam" id="TIGR00465">
    <property type="entry name" value="ilvC"/>
    <property type="match status" value="1"/>
</dbReference>
<dbReference type="NCBIfam" id="NF003557">
    <property type="entry name" value="PRK05225.1"/>
    <property type="match status" value="1"/>
</dbReference>
<dbReference type="PANTHER" id="PTHR21371">
    <property type="entry name" value="KETOL-ACID REDUCTOISOMERASE, MITOCHONDRIAL"/>
    <property type="match status" value="1"/>
</dbReference>
<dbReference type="PANTHER" id="PTHR21371:SF1">
    <property type="entry name" value="KETOL-ACID REDUCTOISOMERASE, MITOCHONDRIAL"/>
    <property type="match status" value="1"/>
</dbReference>
<dbReference type="Pfam" id="PF01450">
    <property type="entry name" value="KARI_C"/>
    <property type="match status" value="2"/>
</dbReference>
<dbReference type="Pfam" id="PF07991">
    <property type="entry name" value="KARI_N"/>
    <property type="match status" value="1"/>
</dbReference>
<dbReference type="SUPFAM" id="SSF48179">
    <property type="entry name" value="6-phosphogluconate dehydrogenase C-terminal domain-like"/>
    <property type="match status" value="2"/>
</dbReference>
<dbReference type="SUPFAM" id="SSF51735">
    <property type="entry name" value="NAD(P)-binding Rossmann-fold domains"/>
    <property type="match status" value="1"/>
</dbReference>
<dbReference type="PROSITE" id="PS51851">
    <property type="entry name" value="KARI_C"/>
    <property type="match status" value="2"/>
</dbReference>
<dbReference type="PROSITE" id="PS51850">
    <property type="entry name" value="KARI_N"/>
    <property type="match status" value="1"/>
</dbReference>
<name>ILVC_SALPB</name>